<dbReference type="EMBL" id="AB025407">
    <property type="protein sequence ID" value="BAA84692.1"/>
    <property type="molecule type" value="mRNA"/>
</dbReference>
<dbReference type="EMBL" id="AK003415">
    <property type="protein sequence ID" value="BAB22777.1"/>
    <property type="molecule type" value="mRNA"/>
</dbReference>
<dbReference type="EMBL" id="AK144059">
    <property type="protein sequence ID" value="BAE25676.1"/>
    <property type="molecule type" value="mRNA"/>
</dbReference>
<dbReference type="EMBL" id="AK167571">
    <property type="protein sequence ID" value="BAE39634.1"/>
    <property type="molecule type" value="mRNA"/>
</dbReference>
<dbReference type="EMBL" id="AK168206">
    <property type="protein sequence ID" value="BAE40166.1"/>
    <property type="molecule type" value="mRNA"/>
</dbReference>
<dbReference type="EMBL" id="AK169309">
    <property type="protein sequence ID" value="BAE41064.1"/>
    <property type="molecule type" value="mRNA"/>
</dbReference>
<dbReference type="EMBL" id="BC072575">
    <property type="protein sequence ID" value="AAH72575.1"/>
    <property type="molecule type" value="mRNA"/>
</dbReference>
<dbReference type="CCDS" id="CCDS21766.1"/>
<dbReference type="RefSeq" id="NP_062746.1">
    <property type="nucleotide sequence ID" value="NM_019772.2"/>
</dbReference>
<dbReference type="BioGRID" id="207934">
    <property type="interactions" value="11"/>
</dbReference>
<dbReference type="FunCoup" id="Q9R0P4">
    <property type="interactions" value="975"/>
</dbReference>
<dbReference type="IntAct" id="Q9R0P4">
    <property type="interactions" value="2"/>
</dbReference>
<dbReference type="MINT" id="Q9R0P4"/>
<dbReference type="STRING" id="10090.ENSMUSP00000032899"/>
<dbReference type="GlyGen" id="Q9R0P4">
    <property type="glycosylation" value="1 site, 1 O-linked glycan (1 site)"/>
</dbReference>
<dbReference type="iPTMnet" id="Q9R0P4"/>
<dbReference type="PhosphoSitePlus" id="Q9R0P4"/>
<dbReference type="jPOST" id="Q9R0P4"/>
<dbReference type="PaxDb" id="10090-ENSMUSP00000032899"/>
<dbReference type="PeptideAtlas" id="Q9R0P4"/>
<dbReference type="Pumba" id="Q9R0P4"/>
<dbReference type="TopDownProteomics" id="Q9R0P4"/>
<dbReference type="Antibodypedia" id="49041">
    <property type="antibodies" value="31 antibodies from 9 providers"/>
</dbReference>
<dbReference type="Ensembl" id="ENSMUST00000032899.12">
    <property type="protein sequence ID" value="ENSMUSP00000032899.6"/>
    <property type="gene ID" value="ENSMUSG00000030663.13"/>
</dbReference>
<dbReference type="GeneID" id="56372"/>
<dbReference type="KEGG" id="mmu:56372"/>
<dbReference type="UCSC" id="uc009jiw.1">
    <property type="organism name" value="mouse"/>
</dbReference>
<dbReference type="AGR" id="MGI:1929274"/>
<dbReference type="MGI" id="MGI:1929274">
    <property type="gene designation" value="1110004F10Rik"/>
</dbReference>
<dbReference type="VEuPathDB" id="HostDB:ENSMUSG00000030663"/>
<dbReference type="eggNOG" id="ENOG502RXI1">
    <property type="taxonomic scope" value="Eukaryota"/>
</dbReference>
<dbReference type="GeneTree" id="ENSGT00390000000687"/>
<dbReference type="HOGENOM" id="CLU_121598_0_0_1"/>
<dbReference type="InParanoid" id="Q9R0P4"/>
<dbReference type="OMA" id="DIGSSNW"/>
<dbReference type="OrthoDB" id="10066125at2759"/>
<dbReference type="PhylomeDB" id="Q9R0P4"/>
<dbReference type="TreeFam" id="TF328803"/>
<dbReference type="BioGRID-ORCS" id="56372">
    <property type="hits" value="1 hit in 77 CRISPR screens"/>
</dbReference>
<dbReference type="ChiTaRS" id="1110004F10Rik">
    <property type="organism name" value="mouse"/>
</dbReference>
<dbReference type="PRO" id="PR:Q9R0P4"/>
<dbReference type="Proteomes" id="UP000000589">
    <property type="component" value="Chromosome 7"/>
</dbReference>
<dbReference type="RNAct" id="Q9R0P4">
    <property type="molecule type" value="protein"/>
</dbReference>
<dbReference type="Bgee" id="ENSMUSG00000030663">
    <property type="expression patterns" value="Expressed in ganglionic eminence and 66 other cell types or tissues"/>
</dbReference>
<dbReference type="ExpressionAtlas" id="Q9R0P4">
    <property type="expression patterns" value="baseline and differential"/>
</dbReference>
<dbReference type="InterPro" id="IPR026714">
    <property type="entry name" value="SMAP"/>
</dbReference>
<dbReference type="InterPro" id="IPR028124">
    <property type="entry name" value="SMAP_dom"/>
</dbReference>
<dbReference type="PANTHER" id="PTHR22175:SF0">
    <property type="entry name" value="SMALL ACIDIC PROTEIN"/>
    <property type="match status" value="1"/>
</dbReference>
<dbReference type="PANTHER" id="PTHR22175">
    <property type="entry name" value="SMALL ACIDIC PROTEIN-RELATED"/>
    <property type="match status" value="1"/>
</dbReference>
<dbReference type="Pfam" id="PF15477">
    <property type="entry name" value="SMAP"/>
    <property type="match status" value="1"/>
</dbReference>
<name>SMAP_MOUSE</name>
<feature type="chain" id="PRO_0000263657" description="Small acidic protein">
    <location>
        <begin position="1"/>
        <end position="181"/>
    </location>
</feature>
<feature type="region of interest" description="Disordered" evidence="2">
    <location>
        <begin position="1"/>
        <end position="181"/>
    </location>
</feature>
<feature type="compositionally biased region" description="Basic and acidic residues" evidence="2">
    <location>
        <begin position="48"/>
        <end position="78"/>
    </location>
</feature>
<feature type="compositionally biased region" description="Acidic residues" evidence="2">
    <location>
        <begin position="106"/>
        <end position="146"/>
    </location>
</feature>
<feature type="compositionally biased region" description="Basic and acidic residues" evidence="2">
    <location>
        <begin position="147"/>
        <end position="169"/>
    </location>
</feature>
<feature type="modified residue" description="Phosphoserine" evidence="4">
    <location>
        <position position="15"/>
    </location>
</feature>
<feature type="modified residue" description="Phosphoserine" evidence="4">
    <location>
        <position position="17"/>
    </location>
</feature>
<feature type="modified residue" description="Phosphoserine" evidence="1">
    <location>
        <position position="63"/>
    </location>
</feature>
<feature type="modified residue" description="Phosphoserine" evidence="1">
    <location>
        <position position="87"/>
    </location>
</feature>
<feature type="modified residue" description="Phosphoserine" evidence="1">
    <location>
        <position position="125"/>
    </location>
</feature>
<feature type="modified residue" description="Phosphoserine" evidence="1">
    <location>
        <position position="145"/>
    </location>
</feature>
<feature type="modified residue" description="N6-acetyllysine" evidence="1">
    <location>
        <position position="172"/>
    </location>
</feature>
<feature type="modified residue" description="N6-acetyllysine" evidence="1">
    <location>
        <position position="177"/>
    </location>
</feature>
<feature type="cross-link" description="Glycyl lysine isopeptide (Lys-Gly) (interchain with G-Cter in SUMO2)" evidence="1">
    <location>
        <position position="13"/>
    </location>
</feature>
<feature type="cross-link" description="Glycyl lysine isopeptide (Lys-Gly) (interchain with G-Cter in SUMO2)" evidence="1">
    <location>
        <position position="62"/>
    </location>
</feature>
<feature type="cross-link" description="Glycyl lysine isopeptide (Lys-Gly) (interchain with G-Cter in SUMO2)" evidence="1">
    <location>
        <position position="75"/>
    </location>
</feature>
<gene>
    <name type="primary">Smap</name>
    <name type="synonym">Sid2057</name>
</gene>
<keyword id="KW-0007">Acetylation</keyword>
<keyword id="KW-1017">Isopeptide bond</keyword>
<keyword id="KW-0597">Phosphoprotein</keyword>
<keyword id="KW-1185">Reference proteome</keyword>
<keyword id="KW-0832">Ubl conjugation</keyword>
<proteinExistence type="evidence at protein level"/>
<reference key="1">
    <citation type="submission" date="1999-03" db="EMBL/GenBank/DDBJ databases">
        <title>Mouse small acidic protein sid2057.</title>
        <authorList>
            <person name="Seki N."/>
            <person name="Hattori A."/>
            <person name="Hayashi A."/>
            <person name="Kozuma S."/>
            <person name="Muramatsu M."/>
            <person name="Saito T."/>
        </authorList>
    </citation>
    <scope>NUCLEOTIDE SEQUENCE [MRNA]</scope>
</reference>
<reference key="2">
    <citation type="journal article" date="2005" name="Science">
        <title>The transcriptional landscape of the mammalian genome.</title>
        <authorList>
            <person name="Carninci P."/>
            <person name="Kasukawa T."/>
            <person name="Katayama S."/>
            <person name="Gough J."/>
            <person name="Frith M.C."/>
            <person name="Maeda N."/>
            <person name="Oyama R."/>
            <person name="Ravasi T."/>
            <person name="Lenhard B."/>
            <person name="Wells C."/>
            <person name="Kodzius R."/>
            <person name="Shimokawa K."/>
            <person name="Bajic V.B."/>
            <person name="Brenner S.E."/>
            <person name="Batalov S."/>
            <person name="Forrest A.R."/>
            <person name="Zavolan M."/>
            <person name="Davis M.J."/>
            <person name="Wilming L.G."/>
            <person name="Aidinis V."/>
            <person name="Allen J.E."/>
            <person name="Ambesi-Impiombato A."/>
            <person name="Apweiler R."/>
            <person name="Aturaliya R.N."/>
            <person name="Bailey T.L."/>
            <person name="Bansal M."/>
            <person name="Baxter L."/>
            <person name="Beisel K.W."/>
            <person name="Bersano T."/>
            <person name="Bono H."/>
            <person name="Chalk A.M."/>
            <person name="Chiu K.P."/>
            <person name="Choudhary V."/>
            <person name="Christoffels A."/>
            <person name="Clutterbuck D.R."/>
            <person name="Crowe M.L."/>
            <person name="Dalla E."/>
            <person name="Dalrymple B.P."/>
            <person name="de Bono B."/>
            <person name="Della Gatta G."/>
            <person name="di Bernardo D."/>
            <person name="Down T."/>
            <person name="Engstrom P."/>
            <person name="Fagiolini M."/>
            <person name="Faulkner G."/>
            <person name="Fletcher C.F."/>
            <person name="Fukushima T."/>
            <person name="Furuno M."/>
            <person name="Futaki S."/>
            <person name="Gariboldi M."/>
            <person name="Georgii-Hemming P."/>
            <person name="Gingeras T.R."/>
            <person name="Gojobori T."/>
            <person name="Green R.E."/>
            <person name="Gustincich S."/>
            <person name="Harbers M."/>
            <person name="Hayashi Y."/>
            <person name="Hensch T.K."/>
            <person name="Hirokawa N."/>
            <person name="Hill D."/>
            <person name="Huminiecki L."/>
            <person name="Iacono M."/>
            <person name="Ikeo K."/>
            <person name="Iwama A."/>
            <person name="Ishikawa T."/>
            <person name="Jakt M."/>
            <person name="Kanapin A."/>
            <person name="Katoh M."/>
            <person name="Kawasawa Y."/>
            <person name="Kelso J."/>
            <person name="Kitamura H."/>
            <person name="Kitano H."/>
            <person name="Kollias G."/>
            <person name="Krishnan S.P."/>
            <person name="Kruger A."/>
            <person name="Kummerfeld S.K."/>
            <person name="Kurochkin I.V."/>
            <person name="Lareau L.F."/>
            <person name="Lazarevic D."/>
            <person name="Lipovich L."/>
            <person name="Liu J."/>
            <person name="Liuni S."/>
            <person name="McWilliam S."/>
            <person name="Madan Babu M."/>
            <person name="Madera M."/>
            <person name="Marchionni L."/>
            <person name="Matsuda H."/>
            <person name="Matsuzawa S."/>
            <person name="Miki H."/>
            <person name="Mignone F."/>
            <person name="Miyake S."/>
            <person name="Morris K."/>
            <person name="Mottagui-Tabar S."/>
            <person name="Mulder N."/>
            <person name="Nakano N."/>
            <person name="Nakauchi H."/>
            <person name="Ng P."/>
            <person name="Nilsson R."/>
            <person name="Nishiguchi S."/>
            <person name="Nishikawa S."/>
            <person name="Nori F."/>
            <person name="Ohara O."/>
            <person name="Okazaki Y."/>
            <person name="Orlando V."/>
            <person name="Pang K.C."/>
            <person name="Pavan W.J."/>
            <person name="Pavesi G."/>
            <person name="Pesole G."/>
            <person name="Petrovsky N."/>
            <person name="Piazza S."/>
            <person name="Reed J."/>
            <person name="Reid J.F."/>
            <person name="Ring B.Z."/>
            <person name="Ringwald M."/>
            <person name="Rost B."/>
            <person name="Ruan Y."/>
            <person name="Salzberg S.L."/>
            <person name="Sandelin A."/>
            <person name="Schneider C."/>
            <person name="Schoenbach C."/>
            <person name="Sekiguchi K."/>
            <person name="Semple C.A."/>
            <person name="Seno S."/>
            <person name="Sessa L."/>
            <person name="Sheng Y."/>
            <person name="Shibata Y."/>
            <person name="Shimada H."/>
            <person name="Shimada K."/>
            <person name="Silva D."/>
            <person name="Sinclair B."/>
            <person name="Sperling S."/>
            <person name="Stupka E."/>
            <person name="Sugiura K."/>
            <person name="Sultana R."/>
            <person name="Takenaka Y."/>
            <person name="Taki K."/>
            <person name="Tammoja K."/>
            <person name="Tan S.L."/>
            <person name="Tang S."/>
            <person name="Taylor M.S."/>
            <person name="Tegner J."/>
            <person name="Teichmann S.A."/>
            <person name="Ueda H.R."/>
            <person name="van Nimwegen E."/>
            <person name="Verardo R."/>
            <person name="Wei C.L."/>
            <person name="Yagi K."/>
            <person name="Yamanishi H."/>
            <person name="Zabarovsky E."/>
            <person name="Zhu S."/>
            <person name="Zimmer A."/>
            <person name="Hide W."/>
            <person name="Bult C."/>
            <person name="Grimmond S.M."/>
            <person name="Teasdale R.D."/>
            <person name="Liu E.T."/>
            <person name="Brusic V."/>
            <person name="Quackenbush J."/>
            <person name="Wahlestedt C."/>
            <person name="Mattick J.S."/>
            <person name="Hume D.A."/>
            <person name="Kai C."/>
            <person name="Sasaki D."/>
            <person name="Tomaru Y."/>
            <person name="Fukuda S."/>
            <person name="Kanamori-Katayama M."/>
            <person name="Suzuki M."/>
            <person name="Aoki J."/>
            <person name="Arakawa T."/>
            <person name="Iida J."/>
            <person name="Imamura K."/>
            <person name="Itoh M."/>
            <person name="Kato T."/>
            <person name="Kawaji H."/>
            <person name="Kawagashira N."/>
            <person name="Kawashima T."/>
            <person name="Kojima M."/>
            <person name="Kondo S."/>
            <person name="Konno H."/>
            <person name="Nakano K."/>
            <person name="Ninomiya N."/>
            <person name="Nishio T."/>
            <person name="Okada M."/>
            <person name="Plessy C."/>
            <person name="Shibata K."/>
            <person name="Shiraki T."/>
            <person name="Suzuki S."/>
            <person name="Tagami M."/>
            <person name="Waki K."/>
            <person name="Watahiki A."/>
            <person name="Okamura-Oho Y."/>
            <person name="Suzuki H."/>
            <person name="Kawai J."/>
            <person name="Hayashizaki Y."/>
        </authorList>
    </citation>
    <scope>NUCLEOTIDE SEQUENCE [LARGE SCALE MRNA]</scope>
    <source>
        <strain>C57BL/6J</strain>
        <strain>DBA/2J</strain>
        <tissue>Embryo</tissue>
        <tissue>Kidney</tissue>
        <tissue>Placenta</tissue>
    </source>
</reference>
<reference key="3">
    <citation type="journal article" date="2004" name="Genome Res.">
        <title>The status, quality, and expansion of the NIH full-length cDNA project: the Mammalian Gene Collection (MGC).</title>
        <authorList>
            <consortium name="The MGC Project Team"/>
        </authorList>
    </citation>
    <scope>NUCLEOTIDE SEQUENCE [LARGE SCALE MRNA]</scope>
    <source>
        <strain>C57BL/6J</strain>
        <tissue>Fetal brain</tissue>
    </source>
</reference>
<reference key="4">
    <citation type="journal article" date="2004" name="Mol. Cell. Proteomics">
        <title>Phosphoproteomic analysis of the developing mouse brain.</title>
        <authorList>
            <person name="Ballif B.A."/>
            <person name="Villen J."/>
            <person name="Beausoleil S.A."/>
            <person name="Schwartz D."/>
            <person name="Gygi S.P."/>
        </authorList>
    </citation>
    <scope>IDENTIFICATION BY MASS SPECTROMETRY [LARGE SCALE ANALYSIS]</scope>
    <source>
        <tissue>Embryonic brain</tissue>
    </source>
</reference>
<reference key="5">
    <citation type="journal article" date="2007" name="Proc. Natl. Acad. Sci. U.S.A.">
        <title>Large-scale phosphorylation analysis of mouse liver.</title>
        <authorList>
            <person name="Villen J."/>
            <person name="Beausoleil S.A."/>
            <person name="Gerber S.A."/>
            <person name="Gygi S.P."/>
        </authorList>
    </citation>
    <scope>IDENTIFICATION BY MASS SPECTROMETRY [LARGE SCALE ANALYSIS]</scope>
    <source>
        <tissue>Liver</tissue>
    </source>
</reference>
<reference key="6">
    <citation type="journal article" date="2008" name="J. Proteome Res.">
        <title>Specific phosphopeptide enrichment with immobilized titanium ion affinity chromatography adsorbent for phosphoproteome analysis.</title>
        <authorList>
            <person name="Zhou H."/>
            <person name="Ye M."/>
            <person name="Dong J."/>
            <person name="Han G."/>
            <person name="Jiang X."/>
            <person name="Wu R."/>
            <person name="Zou H."/>
        </authorList>
    </citation>
    <scope>IDENTIFICATION BY MASS SPECTROMETRY [LARGE SCALE ANALYSIS]</scope>
    <source>
        <tissue>Liver</tissue>
    </source>
</reference>
<reference key="7">
    <citation type="journal article" date="2009" name="Mol. Cell. Proteomics">
        <title>Large scale localization of protein phosphorylation by use of electron capture dissociation mass spectrometry.</title>
        <authorList>
            <person name="Sweet S.M."/>
            <person name="Bailey C.M."/>
            <person name="Cunningham D.L."/>
            <person name="Heath J.K."/>
            <person name="Cooper H.J."/>
        </authorList>
    </citation>
    <scope>IDENTIFICATION BY MASS SPECTROMETRY [LARGE SCALE ANALYSIS]</scope>
    <source>
        <tissue>Embryonic fibroblast</tissue>
    </source>
</reference>
<reference key="8">
    <citation type="journal article" date="2010" name="Cell">
        <title>A tissue-specific atlas of mouse protein phosphorylation and expression.</title>
        <authorList>
            <person name="Huttlin E.L."/>
            <person name="Jedrychowski M.P."/>
            <person name="Elias J.E."/>
            <person name="Goswami T."/>
            <person name="Rad R."/>
            <person name="Beausoleil S.A."/>
            <person name="Villen J."/>
            <person name="Haas W."/>
            <person name="Sowa M.E."/>
            <person name="Gygi S.P."/>
        </authorList>
    </citation>
    <scope>PHOSPHORYLATION [LARGE SCALE ANALYSIS] AT SER-15 AND SER-17</scope>
    <scope>IDENTIFICATION BY MASS SPECTROMETRY [LARGE SCALE ANALYSIS]</scope>
    <source>
        <tissue>Brain</tissue>
        <tissue>Brown adipose tissue</tissue>
        <tissue>Heart</tissue>
        <tissue>Kidney</tissue>
        <tissue>Liver</tissue>
        <tissue>Lung</tissue>
        <tissue>Pancreas</tissue>
        <tissue>Spleen</tissue>
        <tissue>Testis</tissue>
    </source>
</reference>
<evidence type="ECO:0000250" key="1">
    <source>
        <dbReference type="UniProtKB" id="O00193"/>
    </source>
</evidence>
<evidence type="ECO:0000256" key="2">
    <source>
        <dbReference type="SAM" id="MobiDB-lite"/>
    </source>
</evidence>
<evidence type="ECO:0000305" key="3"/>
<evidence type="ECO:0007744" key="4">
    <source>
    </source>
</evidence>
<protein>
    <recommendedName>
        <fullName>Small acidic protein</fullName>
    </recommendedName>
    <alternativeName>
        <fullName>Sid 2057</fullName>
    </alternativeName>
</protein>
<comment type="similarity">
    <text evidence="3">Belongs to the SMAP family.</text>
</comment>
<accession>Q9R0P4</accession>
<sequence length="181" mass="20046">MSAARESHPHGVKRSASPDDDLGSSNWEAADLGNEERKQKFLRLMGAGKKEHTGRLVIGDHKSTSHFRTGEEDKKINEELESQYQQSMDSKLSGRYRRHCGLGFSEVEDHDGEGDVAGDDDEDDSPDAESPDDSDSDSESEKEESAEELHAAEHPDDTEDPKSKKDAKSNYKMMFVKSSGS</sequence>
<organism>
    <name type="scientific">Mus musculus</name>
    <name type="common">Mouse</name>
    <dbReference type="NCBI Taxonomy" id="10090"/>
    <lineage>
        <taxon>Eukaryota</taxon>
        <taxon>Metazoa</taxon>
        <taxon>Chordata</taxon>
        <taxon>Craniata</taxon>
        <taxon>Vertebrata</taxon>
        <taxon>Euteleostomi</taxon>
        <taxon>Mammalia</taxon>
        <taxon>Eutheria</taxon>
        <taxon>Euarchontoglires</taxon>
        <taxon>Glires</taxon>
        <taxon>Rodentia</taxon>
        <taxon>Myomorpha</taxon>
        <taxon>Muroidea</taxon>
        <taxon>Muridae</taxon>
        <taxon>Murinae</taxon>
        <taxon>Mus</taxon>
        <taxon>Mus</taxon>
    </lineage>
</organism>